<dbReference type="EC" id="3.1.3.-"/>
<dbReference type="EC" id="3.6.1.1"/>
<dbReference type="EMBL" id="AB049629">
    <property type="protein sequence ID" value="BAB16411.1"/>
    <property type="molecule type" value="mRNA"/>
</dbReference>
<dbReference type="EMBL" id="AK055532">
    <property type="protein sequence ID" value="BAG51532.1"/>
    <property type="molecule type" value="mRNA"/>
</dbReference>
<dbReference type="EMBL" id="AL513190">
    <property type="status" value="NOT_ANNOTATED_CDS"/>
    <property type="molecule type" value="Genomic_DNA"/>
</dbReference>
<dbReference type="EMBL" id="AL391708">
    <property type="status" value="NOT_ANNOTATED_CDS"/>
    <property type="molecule type" value="Genomic_DNA"/>
</dbReference>
<dbReference type="EMBL" id="AL445237">
    <property type="status" value="NOT_ANNOTATED_CDS"/>
    <property type="molecule type" value="Genomic_DNA"/>
</dbReference>
<dbReference type="EMBL" id="BC110344">
    <property type="protein sequence ID" value="AAI10345.1"/>
    <property type="molecule type" value="mRNA"/>
</dbReference>
<dbReference type="EMBL" id="BC113629">
    <property type="protein sequence ID" value="AAI13630.1"/>
    <property type="molecule type" value="mRNA"/>
</dbReference>
<dbReference type="EMBL" id="BC113631">
    <property type="protein sequence ID" value="AAI13632.1"/>
    <property type="molecule type" value="mRNA"/>
</dbReference>
<dbReference type="CCDS" id="CCDS53587.1">
    <molecule id="Q9H008-2"/>
</dbReference>
<dbReference type="CCDS" id="CCDS7640.1">
    <molecule id="Q9H008-1"/>
</dbReference>
<dbReference type="RefSeq" id="NP_001161352.1">
    <molecule id="Q9H008-2"/>
    <property type="nucleotide sequence ID" value="NM_001167880.2"/>
</dbReference>
<dbReference type="RefSeq" id="NP_001305260.1">
    <property type="nucleotide sequence ID" value="NM_001318331.1"/>
</dbReference>
<dbReference type="RefSeq" id="NP_001305261.1">
    <property type="nucleotide sequence ID" value="NM_001318332.1"/>
</dbReference>
<dbReference type="RefSeq" id="NP_071409.3">
    <molecule id="Q9H008-1"/>
    <property type="nucleotide sequence ID" value="NM_022126.3"/>
</dbReference>
<dbReference type="PDB" id="2X4D">
    <property type="method" value="X-ray"/>
    <property type="resolution" value="1.92 A"/>
    <property type="chains" value="A/B=1-270"/>
</dbReference>
<dbReference type="PDBsum" id="2X4D"/>
<dbReference type="SMR" id="Q9H008"/>
<dbReference type="BioGRID" id="122044">
    <property type="interactions" value="37"/>
</dbReference>
<dbReference type="FunCoup" id="Q9H008">
    <property type="interactions" value="1252"/>
</dbReference>
<dbReference type="IntAct" id="Q9H008">
    <property type="interactions" value="17"/>
</dbReference>
<dbReference type="STRING" id="9606.ENSP00000357835"/>
<dbReference type="ChEMBL" id="CHEMBL5169196"/>
<dbReference type="DEPOD" id="LHPP"/>
<dbReference type="iPTMnet" id="Q9H008"/>
<dbReference type="PhosphoSitePlus" id="Q9H008"/>
<dbReference type="SwissPalm" id="Q9H008"/>
<dbReference type="BioMuta" id="LHPP"/>
<dbReference type="DMDM" id="158705883"/>
<dbReference type="jPOST" id="Q9H008"/>
<dbReference type="MassIVE" id="Q9H008"/>
<dbReference type="PaxDb" id="9606-ENSP00000357835"/>
<dbReference type="PeptideAtlas" id="Q9H008"/>
<dbReference type="ProteomicsDB" id="80192">
    <molecule id="Q9H008-1"/>
</dbReference>
<dbReference type="ProteomicsDB" id="80193">
    <molecule id="Q9H008-2"/>
</dbReference>
<dbReference type="Pumba" id="Q9H008"/>
<dbReference type="Antibodypedia" id="1952">
    <property type="antibodies" value="121 antibodies from 24 providers"/>
</dbReference>
<dbReference type="DNASU" id="64077"/>
<dbReference type="Ensembl" id="ENST00000368839.1">
    <molecule id="Q9H008-2"/>
    <property type="protein sequence ID" value="ENSP00000357832.1"/>
    <property type="gene ID" value="ENSG00000107902.14"/>
</dbReference>
<dbReference type="Ensembl" id="ENST00000368842.10">
    <molecule id="Q9H008-1"/>
    <property type="protein sequence ID" value="ENSP00000357835.5"/>
    <property type="gene ID" value="ENSG00000107902.14"/>
</dbReference>
<dbReference type="GeneID" id="64077"/>
<dbReference type="KEGG" id="hsa:64077"/>
<dbReference type="MANE-Select" id="ENST00000368842.10">
    <property type="protein sequence ID" value="ENSP00000357835.5"/>
    <property type="RefSeq nucleotide sequence ID" value="NM_022126.4"/>
    <property type="RefSeq protein sequence ID" value="NP_071409.3"/>
</dbReference>
<dbReference type="UCSC" id="uc001lhs.3">
    <molecule id="Q9H008-1"/>
    <property type="organism name" value="human"/>
</dbReference>
<dbReference type="AGR" id="HGNC:30042"/>
<dbReference type="CTD" id="64077"/>
<dbReference type="DisGeNET" id="64077"/>
<dbReference type="GeneCards" id="LHPP"/>
<dbReference type="HGNC" id="HGNC:30042">
    <property type="gene designation" value="LHPP"/>
</dbReference>
<dbReference type="HPA" id="ENSG00000107902">
    <property type="expression patterns" value="Tissue enriched (brain)"/>
</dbReference>
<dbReference type="MIM" id="617231">
    <property type="type" value="gene"/>
</dbReference>
<dbReference type="neXtProt" id="NX_Q9H008"/>
<dbReference type="OpenTargets" id="ENSG00000107902"/>
<dbReference type="PharmGKB" id="PA165548763"/>
<dbReference type="VEuPathDB" id="HostDB:ENSG00000107902"/>
<dbReference type="eggNOG" id="KOG3040">
    <property type="taxonomic scope" value="Eukaryota"/>
</dbReference>
<dbReference type="GeneTree" id="ENSGT00940000159002"/>
<dbReference type="HOGENOM" id="CLU_043473_4_1_1"/>
<dbReference type="InParanoid" id="Q9H008"/>
<dbReference type="OMA" id="EEHIFMP"/>
<dbReference type="OrthoDB" id="426235at2759"/>
<dbReference type="PAN-GO" id="Q9H008">
    <property type="GO annotations" value="3 GO annotations based on evolutionary models"/>
</dbReference>
<dbReference type="PhylomeDB" id="Q9H008"/>
<dbReference type="TreeFam" id="TF314344"/>
<dbReference type="BRENDA" id="3.9.1.3">
    <property type="organism ID" value="2681"/>
</dbReference>
<dbReference type="PathwayCommons" id="Q9H008"/>
<dbReference type="Reactome" id="R-HSA-71737">
    <property type="pathway name" value="Pyrophosphate hydrolysis"/>
</dbReference>
<dbReference type="SignaLink" id="Q9H008"/>
<dbReference type="BioGRID-ORCS" id="64077">
    <property type="hits" value="5 hits in 1174 CRISPR screens"/>
</dbReference>
<dbReference type="ChiTaRS" id="LHPP">
    <property type="organism name" value="human"/>
</dbReference>
<dbReference type="EvolutionaryTrace" id="Q9H008"/>
<dbReference type="GenomeRNAi" id="64077"/>
<dbReference type="Pharos" id="Q9H008">
    <property type="development level" value="Tbio"/>
</dbReference>
<dbReference type="PRO" id="PR:Q9H008"/>
<dbReference type="Proteomes" id="UP000005640">
    <property type="component" value="Chromosome 10"/>
</dbReference>
<dbReference type="RNAct" id="Q9H008">
    <property type="molecule type" value="protein"/>
</dbReference>
<dbReference type="Bgee" id="ENSG00000107902">
    <property type="expression patterns" value="Expressed in C1 segment of cervical spinal cord and 138 other cell types or tissues"/>
</dbReference>
<dbReference type="ExpressionAtlas" id="Q9H008">
    <property type="expression patterns" value="baseline and differential"/>
</dbReference>
<dbReference type="GO" id="GO:0005737">
    <property type="term" value="C:cytoplasm"/>
    <property type="evidence" value="ECO:0000318"/>
    <property type="project" value="GO_Central"/>
</dbReference>
<dbReference type="GO" id="GO:0005829">
    <property type="term" value="C:cytosol"/>
    <property type="evidence" value="ECO:0000314"/>
    <property type="project" value="HPA"/>
</dbReference>
<dbReference type="GO" id="GO:0016607">
    <property type="term" value="C:nuclear speck"/>
    <property type="evidence" value="ECO:0000314"/>
    <property type="project" value="HPA"/>
</dbReference>
<dbReference type="GO" id="GO:0005634">
    <property type="term" value="C:nucleus"/>
    <property type="evidence" value="ECO:0000314"/>
    <property type="project" value="UniProtKB"/>
</dbReference>
<dbReference type="GO" id="GO:0004427">
    <property type="term" value="F:inorganic diphosphate phosphatase activity"/>
    <property type="evidence" value="ECO:0000314"/>
    <property type="project" value="UniProtKB"/>
</dbReference>
<dbReference type="GO" id="GO:0046872">
    <property type="term" value="F:metal ion binding"/>
    <property type="evidence" value="ECO:0007669"/>
    <property type="project" value="UniProtKB-KW"/>
</dbReference>
<dbReference type="GO" id="GO:0016791">
    <property type="term" value="F:phosphatase activity"/>
    <property type="evidence" value="ECO:0000318"/>
    <property type="project" value="GO_Central"/>
</dbReference>
<dbReference type="GO" id="GO:0042803">
    <property type="term" value="F:protein homodimerization activity"/>
    <property type="evidence" value="ECO:0000353"/>
    <property type="project" value="UniProtKB"/>
</dbReference>
<dbReference type="GO" id="GO:0006796">
    <property type="term" value="P:phosphate-containing compound metabolic process"/>
    <property type="evidence" value="ECO:0000314"/>
    <property type="project" value="UniProtKB"/>
</dbReference>
<dbReference type="CDD" id="cd07509">
    <property type="entry name" value="HAD_PPase"/>
    <property type="match status" value="1"/>
</dbReference>
<dbReference type="FunFam" id="3.40.50.1000:FF:000051">
    <property type="entry name" value="Phospholysine phosphohistidine inorganic pyrophosphate phosphatase"/>
    <property type="match status" value="1"/>
</dbReference>
<dbReference type="Gene3D" id="3.40.50.1000">
    <property type="entry name" value="HAD superfamily/HAD-like"/>
    <property type="match status" value="2"/>
</dbReference>
<dbReference type="InterPro" id="IPR036412">
    <property type="entry name" value="HAD-like_sf"/>
</dbReference>
<dbReference type="InterPro" id="IPR006357">
    <property type="entry name" value="HAD-SF_hydro_IIA"/>
</dbReference>
<dbReference type="InterPro" id="IPR023214">
    <property type="entry name" value="HAD_sf"/>
</dbReference>
<dbReference type="InterPro" id="IPR006355">
    <property type="entry name" value="LHPP/HDHD2"/>
</dbReference>
<dbReference type="NCBIfam" id="TIGR01460">
    <property type="entry name" value="HAD-SF-IIA"/>
    <property type="match status" value="1"/>
</dbReference>
<dbReference type="NCBIfam" id="TIGR01458">
    <property type="entry name" value="HAD-SF-IIA-hyp3"/>
    <property type="match status" value="1"/>
</dbReference>
<dbReference type="PANTHER" id="PTHR19288">
    <property type="entry name" value="4-NITROPHENYLPHOSPHATASE-RELATED"/>
    <property type="match status" value="1"/>
</dbReference>
<dbReference type="PANTHER" id="PTHR19288:SF44">
    <property type="entry name" value="PHOSPHOLYSINE PHOSPHOHISTIDINE INORGANIC PYROPHOSPHATE PHOSPHATASE"/>
    <property type="match status" value="1"/>
</dbReference>
<dbReference type="Pfam" id="PF13344">
    <property type="entry name" value="Hydrolase_6"/>
    <property type="match status" value="1"/>
</dbReference>
<dbReference type="Pfam" id="PF13242">
    <property type="entry name" value="Hydrolase_like"/>
    <property type="match status" value="1"/>
</dbReference>
<dbReference type="SFLD" id="SFLDG01129">
    <property type="entry name" value="C1.5:_HAD__Beta-PGM__Phosphata"/>
    <property type="match status" value="1"/>
</dbReference>
<dbReference type="SFLD" id="SFLDG01139">
    <property type="entry name" value="C2.A:_Pyridoxal_Phosphate_Phos"/>
    <property type="match status" value="1"/>
</dbReference>
<dbReference type="SFLD" id="SFLDS00003">
    <property type="entry name" value="Haloacid_Dehalogenase"/>
    <property type="match status" value="2"/>
</dbReference>
<dbReference type="SUPFAM" id="SSF56784">
    <property type="entry name" value="HAD-like"/>
    <property type="match status" value="1"/>
</dbReference>
<keyword id="KW-0002">3D-structure</keyword>
<keyword id="KW-0025">Alternative splicing</keyword>
<keyword id="KW-0963">Cytoplasm</keyword>
<keyword id="KW-0378">Hydrolase</keyword>
<keyword id="KW-0460">Magnesium</keyword>
<keyword id="KW-0479">Metal-binding</keyword>
<keyword id="KW-0539">Nucleus</keyword>
<keyword id="KW-1267">Proteomics identification</keyword>
<keyword id="KW-1185">Reference proteome</keyword>
<feature type="chain" id="PRO_0000305074" description="Phospholysine phosphohistidine inorganic pyrophosphate phosphatase">
    <location>
        <begin position="1"/>
        <end position="270"/>
    </location>
</feature>
<feature type="binding site">
    <location>
        <begin position="17"/>
        <end position="19"/>
    </location>
    <ligand>
        <name>substrate</name>
    </ligand>
</feature>
<feature type="binding site">
    <location>
        <position position="17"/>
    </location>
    <ligand>
        <name>Mg(2+)</name>
        <dbReference type="ChEBI" id="CHEBI:18420"/>
    </ligand>
</feature>
<feature type="binding site">
    <location>
        <position position="19"/>
    </location>
    <ligand>
        <name>Mg(2+)</name>
        <dbReference type="ChEBI" id="CHEBI:18420"/>
    </ligand>
</feature>
<feature type="binding site">
    <location>
        <begin position="54"/>
        <end position="55"/>
    </location>
    <ligand>
        <name>substrate</name>
    </ligand>
</feature>
<feature type="binding site">
    <location>
        <position position="189"/>
    </location>
    <ligand>
        <name>substrate</name>
    </ligand>
</feature>
<feature type="binding site">
    <location>
        <position position="214"/>
    </location>
    <ligand>
        <name>Mg(2+)</name>
        <dbReference type="ChEBI" id="CHEBI:18420"/>
    </ligand>
</feature>
<feature type="splice variant" id="VSP_041685" description="In isoform 2." evidence="7">
    <original>V</original>
    <variation>Q</variation>
    <location>
        <position position="210"/>
    </location>
</feature>
<feature type="splice variant" id="VSP_041686" description="In isoform 2." evidence="7">
    <location>
        <begin position="211"/>
        <end position="270"/>
    </location>
</feature>
<feature type="sequence variant" id="VAR_035163" description="In dbSNP:rs6597801." evidence="2 3 4">
    <original>Q</original>
    <variation>R</variation>
    <location>
        <position position="94"/>
    </location>
</feature>
<feature type="sequence conflict" description="In Ref. 2; BAG51532." evidence="8" ref="2">
    <original>K</original>
    <variation>R</variation>
    <location>
        <position position="155"/>
    </location>
</feature>
<feature type="sequence conflict" description="In Ref. 4; AAI10345." evidence="8" ref="4">
    <original>G</original>
    <variation>C</variation>
    <location>
        <position position="170"/>
    </location>
</feature>
<feature type="helix" evidence="9">
    <location>
        <begin position="4"/>
        <end position="7"/>
    </location>
</feature>
<feature type="turn" evidence="9">
    <location>
        <begin position="8"/>
        <end position="10"/>
    </location>
</feature>
<feature type="strand" evidence="9">
    <location>
        <begin position="13"/>
        <end position="16"/>
    </location>
</feature>
<feature type="turn" evidence="9">
    <location>
        <begin position="19"/>
        <end position="21"/>
    </location>
</feature>
<feature type="strand" evidence="9">
    <location>
        <begin position="22"/>
        <end position="24"/>
    </location>
</feature>
<feature type="turn" evidence="9">
    <location>
        <begin position="27"/>
        <end position="29"/>
    </location>
</feature>
<feature type="helix" evidence="9">
    <location>
        <begin position="36"/>
        <end position="45"/>
    </location>
</feature>
<feature type="strand" evidence="9">
    <location>
        <begin position="46"/>
        <end position="53"/>
    </location>
</feature>
<feature type="helix" evidence="9">
    <location>
        <begin position="61"/>
        <end position="70"/>
    </location>
</feature>
<feature type="helix" evidence="9">
    <location>
        <begin position="77"/>
        <end position="79"/>
    </location>
</feature>
<feature type="helix" evidence="9">
    <location>
        <begin position="83"/>
        <end position="94"/>
    </location>
</feature>
<feature type="strand" evidence="9">
    <location>
        <begin position="98"/>
        <end position="101"/>
    </location>
</feature>
<feature type="helix" evidence="9">
    <location>
        <begin position="104"/>
        <end position="110"/>
    </location>
</feature>
<feature type="strand" evidence="9">
    <location>
        <begin position="119"/>
        <end position="123"/>
    </location>
</feature>
<feature type="helix" evidence="9">
    <location>
        <begin position="127"/>
        <end position="129"/>
    </location>
</feature>
<feature type="helix" evidence="9">
    <location>
        <begin position="132"/>
        <end position="144"/>
    </location>
</feature>
<feature type="strand" evidence="9">
    <location>
        <begin position="150"/>
        <end position="153"/>
    </location>
</feature>
<feature type="strand" evidence="9">
    <location>
        <begin position="157"/>
        <end position="161"/>
    </location>
</feature>
<feature type="strand" evidence="9">
    <location>
        <begin position="164"/>
        <end position="167"/>
    </location>
</feature>
<feature type="helix" evidence="9">
    <location>
        <begin position="169"/>
        <end position="180"/>
    </location>
</feature>
<feature type="strand" evidence="9">
    <location>
        <begin position="185"/>
        <end position="188"/>
    </location>
</feature>
<feature type="helix" evidence="9">
    <location>
        <begin position="192"/>
        <end position="202"/>
    </location>
</feature>
<feature type="helix" evidence="9">
    <location>
        <begin position="206"/>
        <end position="208"/>
    </location>
</feature>
<feature type="strand" evidence="9">
    <location>
        <begin position="209"/>
        <end position="214"/>
    </location>
</feature>
<feature type="turn" evidence="9">
    <location>
        <begin position="216"/>
        <end position="219"/>
    </location>
</feature>
<feature type="helix" evidence="9">
    <location>
        <begin position="220"/>
        <end position="225"/>
    </location>
</feature>
<feature type="strand" evidence="9">
    <location>
        <begin position="229"/>
        <end position="235"/>
    </location>
</feature>
<feature type="helix" evidence="9">
    <location>
        <begin position="240"/>
        <end position="244"/>
    </location>
</feature>
<feature type="strand" evidence="9">
    <location>
        <begin position="251"/>
        <end position="256"/>
    </location>
</feature>
<feature type="helix" evidence="9">
    <location>
        <begin position="257"/>
        <end position="267"/>
    </location>
</feature>
<name>LHPP_HUMAN</name>
<evidence type="ECO:0000250" key="1"/>
<evidence type="ECO:0000269" key="2">
    <source>
    </source>
</evidence>
<evidence type="ECO:0000269" key="3">
    <source>
    </source>
</evidence>
<evidence type="ECO:0000269" key="4">
    <source>
    </source>
</evidence>
<evidence type="ECO:0000269" key="5">
    <source>
    </source>
</evidence>
<evidence type="ECO:0000269" key="6">
    <source ref="7"/>
</evidence>
<evidence type="ECO:0000303" key="7">
    <source>
    </source>
</evidence>
<evidence type="ECO:0000305" key="8"/>
<evidence type="ECO:0007829" key="9">
    <source>
        <dbReference type="PDB" id="2X4D"/>
    </source>
</evidence>
<proteinExistence type="evidence at protein level"/>
<sequence length="270" mass="29165">MAPWGKRLAGVRGVLLDISGVLYDSGAGGGTAIAGSVEAVARLKRSRLKVRFCTNESQKSRAELVGQLQRLGFDISEQEVTAPAPAACQILKEQGLRPYLLIHDGVRSEFDQIDTSNPNCVVIADAGESFSYQNMNNAFQVLMELEKPVLISLGKGRYYKETSGLMLDVGPYMKALEYACGIKAEVVGKPSPEFFKSALQAIGVEAHQAVMIGDDIVGDVGGAQRCGMRALQVRTGKFRPSDEHHPEVKADGYVDNLAEAVDLLLQHADK</sequence>
<comment type="function">
    <text evidence="1">Phosphatase that hydrolyzes imidodiphosphate, 3-phosphohistidine and 6-phospholysine. Has broad substrate specificity and can also hydrolyze inorganic diphosphate, but with lower efficiency (By similarity).</text>
</comment>
<comment type="catalytic activity">
    <reaction evidence="2">
        <text>diphosphate + H2O = 2 phosphate + H(+)</text>
        <dbReference type="Rhea" id="RHEA:24576"/>
        <dbReference type="ChEBI" id="CHEBI:15377"/>
        <dbReference type="ChEBI" id="CHEBI:15378"/>
        <dbReference type="ChEBI" id="CHEBI:33019"/>
        <dbReference type="ChEBI" id="CHEBI:43474"/>
        <dbReference type="EC" id="3.6.1.1"/>
    </reaction>
</comment>
<comment type="cofactor">
    <cofactor evidence="2 6">
        <name>Mg(2+)</name>
        <dbReference type="ChEBI" id="CHEBI:18420"/>
    </cofactor>
    <text evidence="2 6">Binds 1 Mg(2+) ion per subunit.</text>
</comment>
<comment type="biophysicochemical properties">
    <phDependence>
        <text evidence="2">Optimum pH is 7.0 for PNP, and 5.5 for PPi.</text>
    </phDependence>
</comment>
<comment type="subunit">
    <text evidence="2 6">Homodimer.</text>
</comment>
<comment type="interaction">
    <interactant intactId="EBI-1059330">
        <id>Q9H008</id>
    </interactant>
    <interactant intactId="EBI-10304657">
        <id>Q9H0R4</id>
        <label>HDHD2</label>
    </interactant>
    <organismsDiffer>false</organismsDiffer>
    <experiments>2</experiments>
</comment>
<comment type="interaction">
    <interactant intactId="EBI-1059330">
        <id>Q9H008</id>
    </interactant>
    <interactant intactId="EBI-5667532">
        <id>Q3MJ62</id>
        <label>ZSCAN23</label>
    </interactant>
    <organismsDiffer>false</organismsDiffer>
    <experiments>3</experiments>
</comment>
<comment type="subcellular location">
    <subcellularLocation>
        <location evidence="5">Cytoplasm</location>
    </subcellularLocation>
    <subcellularLocation>
        <location evidence="5">Nucleus</location>
    </subcellularLocation>
</comment>
<comment type="alternative products">
    <event type="alternative splicing"/>
    <isoform>
        <id>Q9H008-1</id>
        <name>1</name>
        <sequence type="displayed"/>
    </isoform>
    <isoform>
        <id>Q9H008-2</id>
        <name>2</name>
        <sequence type="described" ref="VSP_041685 VSP_041686"/>
    </isoform>
</comment>
<comment type="tissue specificity">
    <text evidence="2 5">Expressed in brain, and at lower levels in liver and kidney. Detected in thyroid (at protein level). Expressed in liver, kidney and moderately in brain.</text>
</comment>
<comment type="similarity">
    <text evidence="8">Belongs to the HAD-like hydrolase superfamily.</text>
</comment>
<accession>Q9H008</accession>
<accession>B3KP20</accession>
<accession>Q2TBE9</accession>
<accession>Q5VUV9</accession>
<accession>Q5VUW0</accession>
<gene>
    <name type="primary">LHPP</name>
</gene>
<reference key="1">
    <citation type="journal article" date="2003" name="J. Biochem.">
        <title>Molecular cloning of a cDNA for the human phospholysine phosphohistidine inorganic pyrophosphate phosphatase.</title>
        <authorList>
            <person name="Yokoi F."/>
            <person name="Hiraishi H."/>
            <person name="Izuhara K."/>
        </authorList>
    </citation>
    <scope>NUCLEOTIDE SEQUENCE [MRNA] (ISOFORM 1)</scope>
    <scope>SUBUNIT</scope>
    <scope>CATALYTIC ACTIVITY</scope>
    <scope>COFACTOR</scope>
    <scope>BIOPHYSICOCHEMICAL PROPERTIES</scope>
    <scope>TISSUE SPECIFICITY</scope>
    <scope>VARIANT ARG-94</scope>
    <source>
        <tissue>Cervix carcinoma</tissue>
    </source>
</reference>
<reference key="2">
    <citation type="journal article" date="2004" name="Nat. Genet.">
        <title>Complete sequencing and characterization of 21,243 full-length human cDNAs.</title>
        <authorList>
            <person name="Ota T."/>
            <person name="Suzuki Y."/>
            <person name="Nishikawa T."/>
            <person name="Otsuki T."/>
            <person name="Sugiyama T."/>
            <person name="Irie R."/>
            <person name="Wakamatsu A."/>
            <person name="Hayashi K."/>
            <person name="Sato H."/>
            <person name="Nagai K."/>
            <person name="Kimura K."/>
            <person name="Makita H."/>
            <person name="Sekine M."/>
            <person name="Obayashi M."/>
            <person name="Nishi T."/>
            <person name="Shibahara T."/>
            <person name="Tanaka T."/>
            <person name="Ishii S."/>
            <person name="Yamamoto J."/>
            <person name="Saito K."/>
            <person name="Kawai Y."/>
            <person name="Isono Y."/>
            <person name="Nakamura Y."/>
            <person name="Nagahari K."/>
            <person name="Murakami K."/>
            <person name="Yasuda T."/>
            <person name="Iwayanagi T."/>
            <person name="Wagatsuma M."/>
            <person name="Shiratori A."/>
            <person name="Sudo H."/>
            <person name="Hosoiri T."/>
            <person name="Kaku Y."/>
            <person name="Kodaira H."/>
            <person name="Kondo H."/>
            <person name="Sugawara M."/>
            <person name="Takahashi M."/>
            <person name="Kanda K."/>
            <person name="Yokoi T."/>
            <person name="Furuya T."/>
            <person name="Kikkawa E."/>
            <person name="Omura Y."/>
            <person name="Abe K."/>
            <person name="Kamihara K."/>
            <person name="Katsuta N."/>
            <person name="Sato K."/>
            <person name="Tanikawa M."/>
            <person name="Yamazaki M."/>
            <person name="Ninomiya K."/>
            <person name="Ishibashi T."/>
            <person name="Yamashita H."/>
            <person name="Murakawa K."/>
            <person name="Fujimori K."/>
            <person name="Tanai H."/>
            <person name="Kimata M."/>
            <person name="Watanabe M."/>
            <person name="Hiraoka S."/>
            <person name="Chiba Y."/>
            <person name="Ishida S."/>
            <person name="Ono Y."/>
            <person name="Takiguchi S."/>
            <person name="Watanabe S."/>
            <person name="Yosida M."/>
            <person name="Hotuta T."/>
            <person name="Kusano J."/>
            <person name="Kanehori K."/>
            <person name="Takahashi-Fujii A."/>
            <person name="Hara H."/>
            <person name="Tanase T.-O."/>
            <person name="Nomura Y."/>
            <person name="Togiya S."/>
            <person name="Komai F."/>
            <person name="Hara R."/>
            <person name="Takeuchi K."/>
            <person name="Arita M."/>
            <person name="Imose N."/>
            <person name="Musashino K."/>
            <person name="Yuuki H."/>
            <person name="Oshima A."/>
            <person name="Sasaki N."/>
            <person name="Aotsuka S."/>
            <person name="Yoshikawa Y."/>
            <person name="Matsunawa H."/>
            <person name="Ichihara T."/>
            <person name="Shiohata N."/>
            <person name="Sano S."/>
            <person name="Moriya S."/>
            <person name="Momiyama H."/>
            <person name="Satoh N."/>
            <person name="Takami S."/>
            <person name="Terashima Y."/>
            <person name="Suzuki O."/>
            <person name="Nakagawa S."/>
            <person name="Senoh A."/>
            <person name="Mizoguchi H."/>
            <person name="Goto Y."/>
            <person name="Shimizu F."/>
            <person name="Wakebe H."/>
            <person name="Hishigaki H."/>
            <person name="Watanabe T."/>
            <person name="Sugiyama A."/>
            <person name="Takemoto M."/>
            <person name="Kawakami B."/>
            <person name="Yamazaki M."/>
            <person name="Watanabe K."/>
            <person name="Kumagai A."/>
            <person name="Itakura S."/>
            <person name="Fukuzumi Y."/>
            <person name="Fujimori Y."/>
            <person name="Komiyama M."/>
            <person name="Tashiro H."/>
            <person name="Tanigami A."/>
            <person name="Fujiwara T."/>
            <person name="Ono T."/>
            <person name="Yamada K."/>
            <person name="Fujii Y."/>
            <person name="Ozaki K."/>
            <person name="Hirao M."/>
            <person name="Ohmori Y."/>
            <person name="Kawabata A."/>
            <person name="Hikiji T."/>
            <person name="Kobatake N."/>
            <person name="Inagaki H."/>
            <person name="Ikema Y."/>
            <person name="Okamoto S."/>
            <person name="Okitani R."/>
            <person name="Kawakami T."/>
            <person name="Noguchi S."/>
            <person name="Itoh T."/>
            <person name="Shigeta K."/>
            <person name="Senba T."/>
            <person name="Matsumura K."/>
            <person name="Nakajima Y."/>
            <person name="Mizuno T."/>
            <person name="Morinaga M."/>
            <person name="Sasaki M."/>
            <person name="Togashi T."/>
            <person name="Oyama M."/>
            <person name="Hata H."/>
            <person name="Watanabe M."/>
            <person name="Komatsu T."/>
            <person name="Mizushima-Sugano J."/>
            <person name="Satoh T."/>
            <person name="Shirai Y."/>
            <person name="Takahashi Y."/>
            <person name="Nakagawa K."/>
            <person name="Okumura K."/>
            <person name="Nagase T."/>
            <person name="Nomura N."/>
            <person name="Kikuchi H."/>
            <person name="Masuho Y."/>
            <person name="Yamashita R."/>
            <person name="Nakai K."/>
            <person name="Yada T."/>
            <person name="Nakamura Y."/>
            <person name="Ohara O."/>
            <person name="Isogai T."/>
            <person name="Sugano S."/>
        </authorList>
    </citation>
    <scope>NUCLEOTIDE SEQUENCE [LARGE SCALE MRNA] (ISOFORM 1)</scope>
    <scope>VARIANT ARG-94</scope>
    <source>
        <tissue>Heart</tissue>
    </source>
</reference>
<reference key="3">
    <citation type="journal article" date="2004" name="Nature">
        <title>The DNA sequence and comparative analysis of human chromosome 10.</title>
        <authorList>
            <person name="Deloukas P."/>
            <person name="Earthrowl M.E."/>
            <person name="Grafham D.V."/>
            <person name="Rubenfield M."/>
            <person name="French L."/>
            <person name="Steward C.A."/>
            <person name="Sims S.K."/>
            <person name="Jones M.C."/>
            <person name="Searle S."/>
            <person name="Scott C."/>
            <person name="Howe K."/>
            <person name="Hunt S.E."/>
            <person name="Andrews T.D."/>
            <person name="Gilbert J.G.R."/>
            <person name="Swarbreck D."/>
            <person name="Ashurst J.L."/>
            <person name="Taylor A."/>
            <person name="Battles J."/>
            <person name="Bird C.P."/>
            <person name="Ainscough R."/>
            <person name="Almeida J.P."/>
            <person name="Ashwell R.I.S."/>
            <person name="Ambrose K.D."/>
            <person name="Babbage A.K."/>
            <person name="Bagguley C.L."/>
            <person name="Bailey J."/>
            <person name="Banerjee R."/>
            <person name="Bates K."/>
            <person name="Beasley H."/>
            <person name="Bray-Allen S."/>
            <person name="Brown A.J."/>
            <person name="Brown J.Y."/>
            <person name="Burford D.C."/>
            <person name="Burrill W."/>
            <person name="Burton J."/>
            <person name="Cahill P."/>
            <person name="Camire D."/>
            <person name="Carter N.P."/>
            <person name="Chapman J.C."/>
            <person name="Clark S.Y."/>
            <person name="Clarke G."/>
            <person name="Clee C.M."/>
            <person name="Clegg S."/>
            <person name="Corby N."/>
            <person name="Coulson A."/>
            <person name="Dhami P."/>
            <person name="Dutta I."/>
            <person name="Dunn M."/>
            <person name="Faulkner L."/>
            <person name="Frankish A."/>
            <person name="Frankland J.A."/>
            <person name="Garner P."/>
            <person name="Garnett J."/>
            <person name="Gribble S."/>
            <person name="Griffiths C."/>
            <person name="Grocock R."/>
            <person name="Gustafson E."/>
            <person name="Hammond S."/>
            <person name="Harley J.L."/>
            <person name="Hart E."/>
            <person name="Heath P.D."/>
            <person name="Ho T.P."/>
            <person name="Hopkins B."/>
            <person name="Horne J."/>
            <person name="Howden P.J."/>
            <person name="Huckle E."/>
            <person name="Hynds C."/>
            <person name="Johnson C."/>
            <person name="Johnson D."/>
            <person name="Kana A."/>
            <person name="Kay M."/>
            <person name="Kimberley A.M."/>
            <person name="Kershaw J.K."/>
            <person name="Kokkinaki M."/>
            <person name="Laird G.K."/>
            <person name="Lawlor S."/>
            <person name="Lee H.M."/>
            <person name="Leongamornlert D.A."/>
            <person name="Laird G."/>
            <person name="Lloyd C."/>
            <person name="Lloyd D.M."/>
            <person name="Loveland J."/>
            <person name="Lovell J."/>
            <person name="McLaren S."/>
            <person name="McLay K.E."/>
            <person name="McMurray A."/>
            <person name="Mashreghi-Mohammadi M."/>
            <person name="Matthews L."/>
            <person name="Milne S."/>
            <person name="Nickerson T."/>
            <person name="Nguyen M."/>
            <person name="Overton-Larty E."/>
            <person name="Palmer S.A."/>
            <person name="Pearce A.V."/>
            <person name="Peck A.I."/>
            <person name="Pelan S."/>
            <person name="Phillimore B."/>
            <person name="Porter K."/>
            <person name="Rice C.M."/>
            <person name="Rogosin A."/>
            <person name="Ross M.T."/>
            <person name="Sarafidou T."/>
            <person name="Sehra H.K."/>
            <person name="Shownkeen R."/>
            <person name="Skuce C.D."/>
            <person name="Smith M."/>
            <person name="Standring L."/>
            <person name="Sycamore N."/>
            <person name="Tester J."/>
            <person name="Thorpe A."/>
            <person name="Torcasso W."/>
            <person name="Tracey A."/>
            <person name="Tromans A."/>
            <person name="Tsolas J."/>
            <person name="Wall M."/>
            <person name="Walsh J."/>
            <person name="Wang H."/>
            <person name="Weinstock K."/>
            <person name="West A.P."/>
            <person name="Willey D.L."/>
            <person name="Whitehead S.L."/>
            <person name="Wilming L."/>
            <person name="Wray P.W."/>
            <person name="Young L."/>
            <person name="Chen Y."/>
            <person name="Lovering R.C."/>
            <person name="Moschonas N.K."/>
            <person name="Siebert R."/>
            <person name="Fechtel K."/>
            <person name="Bentley D."/>
            <person name="Durbin R.M."/>
            <person name="Hubbard T."/>
            <person name="Doucette-Stamm L."/>
            <person name="Beck S."/>
            <person name="Smith D.R."/>
            <person name="Rogers J."/>
        </authorList>
    </citation>
    <scope>NUCLEOTIDE SEQUENCE [LARGE SCALE GENOMIC DNA]</scope>
</reference>
<reference key="4">
    <citation type="journal article" date="2004" name="Genome Res.">
        <title>The status, quality, and expansion of the NIH full-length cDNA project: the Mammalian Gene Collection (MGC).</title>
        <authorList>
            <consortium name="The MGC Project Team"/>
        </authorList>
    </citation>
    <scope>NUCLEOTIDE SEQUENCE [LARGE SCALE MRNA] (ISOFORMS 1 AND 2)</scope>
    <scope>VARIANT ARG-94</scope>
    <source>
        <tissue>Brain</tissue>
    </source>
</reference>
<reference key="5">
    <citation type="journal article" date="2006" name="Biochem. Biophys. Res. Commun.">
        <title>Expression of new human inorganic pyrophosphatase in thyroid diseases: its intimate association with hyperthyroidism.</title>
        <authorList>
            <person name="Koike E."/>
            <person name="Toda S."/>
            <person name="Yokoi F."/>
            <person name="Izuhara K."/>
            <person name="Koike N."/>
            <person name="Itoh K."/>
            <person name="Miyazaki K."/>
            <person name="Sugihara H."/>
        </authorList>
    </citation>
    <scope>SUBCELLULAR LOCATION</scope>
    <scope>TISSUE SPECIFICITY</scope>
</reference>
<reference key="6">
    <citation type="journal article" date="2014" name="J. Proteomics">
        <title>An enzyme assisted RP-RPLC approach for in-depth analysis of human liver phosphoproteome.</title>
        <authorList>
            <person name="Bian Y."/>
            <person name="Song C."/>
            <person name="Cheng K."/>
            <person name="Dong M."/>
            <person name="Wang F."/>
            <person name="Huang J."/>
            <person name="Sun D."/>
            <person name="Wang L."/>
            <person name="Ye M."/>
            <person name="Zou H."/>
        </authorList>
    </citation>
    <scope>IDENTIFICATION BY MASS SPECTROMETRY [LARGE SCALE ANALYSIS]</scope>
    <source>
        <tissue>Liver</tissue>
    </source>
</reference>
<reference key="7">
    <citation type="submission" date="2010-03" db="PDB data bank">
        <title>Crystal structure of human phospholysine phosphohistidine inorganic pyrophosphate phosphatase LHPP.</title>
        <authorList>
            <consortium name="Structural genomics consortium (SGC)"/>
        </authorList>
    </citation>
    <scope>X-RAY CRYSTALLOGRAPHY (1.92 ANGSTROMS) IN COMPLEX WITH SUBSTRATE ANALOG AND MAGNESIUM IONS</scope>
    <scope>COFACTOR</scope>
</reference>
<organism>
    <name type="scientific">Homo sapiens</name>
    <name type="common">Human</name>
    <dbReference type="NCBI Taxonomy" id="9606"/>
    <lineage>
        <taxon>Eukaryota</taxon>
        <taxon>Metazoa</taxon>
        <taxon>Chordata</taxon>
        <taxon>Craniata</taxon>
        <taxon>Vertebrata</taxon>
        <taxon>Euteleostomi</taxon>
        <taxon>Mammalia</taxon>
        <taxon>Eutheria</taxon>
        <taxon>Euarchontoglires</taxon>
        <taxon>Primates</taxon>
        <taxon>Haplorrhini</taxon>
        <taxon>Catarrhini</taxon>
        <taxon>Hominidae</taxon>
        <taxon>Homo</taxon>
    </lineage>
</organism>
<protein>
    <recommendedName>
        <fullName>Phospholysine phosphohistidine inorganic pyrophosphate phosphatase</fullName>
        <shortName>hLHPP</shortName>
        <ecNumber>3.1.3.-</ecNumber>
        <ecNumber>3.6.1.1</ecNumber>
    </recommendedName>
</protein>